<sequence>MDENIIINILRKEMMPGLGVTEPASIALSSAKAYEVIGGEIKNIKIIADPGLFKNAFSCAIPGTKEVGNEMAALLGTICGDASLGLECLRKIKKEDVSKAKTMLDKIDIEIKSQTEGLYVESIVTTNNGIGRTIIRYKHDNIVLVEKNNKILYQKENNLNKSNNFSQEAIDSKKITEMKLDEIVEFVNNVNYEKIEFLLESIKMNKKLSEKGLEGLGIGLGKLILESCNENNYELYAEALTCSAIDARVSGAPVPAMTVTGSGNHGIITTLPLLAIKEKKNLNNEVLARSIALSYIINIYIKEFSGKLSAFCGCAVAAGTGVSAGICYLLGGSLKEIENTIKNMASNITGMICTGGNLACSLKANTGVKAAFLSAKMALNNIVIPNKCGIVSNSIEDTMKNIGRIAYPGMMETDKEILNIMIESSK</sequence>
<comment type="similarity">
    <text evidence="1">Belongs to the UPF0597 family.</text>
</comment>
<accession>A7FUM5</accession>
<organism>
    <name type="scientific">Clostridium botulinum (strain ATCC 19397 / Type A)</name>
    <dbReference type="NCBI Taxonomy" id="441770"/>
    <lineage>
        <taxon>Bacteria</taxon>
        <taxon>Bacillati</taxon>
        <taxon>Bacillota</taxon>
        <taxon>Clostridia</taxon>
        <taxon>Eubacteriales</taxon>
        <taxon>Clostridiaceae</taxon>
        <taxon>Clostridium</taxon>
    </lineage>
</organism>
<name>Y1750_CLOB1</name>
<feature type="chain" id="PRO_0000339793" description="UPF0597 protein CLB_1750">
    <location>
        <begin position="1"/>
        <end position="426"/>
    </location>
</feature>
<protein>
    <recommendedName>
        <fullName evidence="1">UPF0597 protein CLB_1750</fullName>
    </recommendedName>
</protein>
<evidence type="ECO:0000255" key="1">
    <source>
        <dbReference type="HAMAP-Rule" id="MF_01845"/>
    </source>
</evidence>
<dbReference type="EMBL" id="CP000726">
    <property type="protein sequence ID" value="ABS34979.1"/>
    <property type="molecule type" value="Genomic_DNA"/>
</dbReference>
<dbReference type="RefSeq" id="WP_011986389.1">
    <property type="nucleotide sequence ID" value="NC_009697.1"/>
</dbReference>
<dbReference type="SMR" id="A7FUM5"/>
<dbReference type="KEGG" id="cba:CLB_1750"/>
<dbReference type="HOGENOM" id="CLU_051840_0_0_9"/>
<dbReference type="GO" id="GO:0080146">
    <property type="term" value="F:L-cysteine desulfhydrase activity"/>
    <property type="evidence" value="ECO:0007669"/>
    <property type="project" value="TreeGrafter"/>
</dbReference>
<dbReference type="GO" id="GO:0019450">
    <property type="term" value="P:L-cysteine catabolic process to pyruvate"/>
    <property type="evidence" value="ECO:0007669"/>
    <property type="project" value="TreeGrafter"/>
</dbReference>
<dbReference type="HAMAP" id="MF_01845">
    <property type="entry name" value="UPF0597"/>
    <property type="match status" value="1"/>
</dbReference>
<dbReference type="InterPro" id="IPR005130">
    <property type="entry name" value="Ser_deHydtase-like_asu"/>
</dbReference>
<dbReference type="InterPro" id="IPR021144">
    <property type="entry name" value="UPF0597"/>
</dbReference>
<dbReference type="PANTHER" id="PTHR30501">
    <property type="entry name" value="UPF0597 PROTEIN YHAM"/>
    <property type="match status" value="1"/>
</dbReference>
<dbReference type="PANTHER" id="PTHR30501:SF2">
    <property type="entry name" value="UPF0597 PROTEIN YHAM"/>
    <property type="match status" value="1"/>
</dbReference>
<dbReference type="Pfam" id="PF03313">
    <property type="entry name" value="SDH_alpha"/>
    <property type="match status" value="1"/>
</dbReference>
<dbReference type="PIRSF" id="PIRSF006054">
    <property type="entry name" value="UCP006054"/>
    <property type="match status" value="1"/>
</dbReference>
<gene>
    <name type="ordered locus">CLB_1750</name>
</gene>
<reference key="1">
    <citation type="journal article" date="2007" name="PLoS ONE">
        <title>Analysis of the neurotoxin complex genes in Clostridium botulinum A1-A4 and B1 strains: BoNT/A3, /Ba4 and /B1 clusters are located within plasmids.</title>
        <authorList>
            <person name="Smith T.J."/>
            <person name="Hill K.K."/>
            <person name="Foley B.T."/>
            <person name="Detter J.C."/>
            <person name="Munk A.C."/>
            <person name="Bruce D.C."/>
            <person name="Doggett N.A."/>
            <person name="Smith L.A."/>
            <person name="Marks J.D."/>
            <person name="Xie G."/>
            <person name="Brettin T.S."/>
        </authorList>
    </citation>
    <scope>NUCLEOTIDE SEQUENCE [LARGE SCALE GENOMIC DNA]</scope>
    <source>
        <strain>ATCC 19397 / Type A</strain>
    </source>
</reference>
<proteinExistence type="inferred from homology"/>